<proteinExistence type="inferred from homology"/>
<feature type="chain" id="PRO_0000102001" description="ATP-dependent DNA helicase DinG">
    <location>
        <begin position="1"/>
        <end position="714"/>
    </location>
</feature>
<feature type="domain" description="Helicase ATP-binding" evidence="1">
    <location>
        <begin position="17"/>
        <end position="294"/>
    </location>
</feature>
<feature type="domain" description="Helicase C-terminal" evidence="1">
    <location>
        <begin position="517"/>
        <end position="698"/>
    </location>
</feature>
<feature type="short sequence motif" description="DEAH box" evidence="1">
    <location>
        <begin position="248"/>
        <end position="251"/>
    </location>
</feature>
<feature type="binding site" evidence="1 2">
    <location>
        <begin position="54"/>
        <end position="61"/>
    </location>
    <ligand>
        <name>ATP</name>
        <dbReference type="ChEBI" id="CHEBI:30616"/>
    </ligand>
</feature>
<feature type="binding site" evidence="1">
    <location>
        <position position="120"/>
    </location>
    <ligand>
        <name>[4Fe-4S] cluster</name>
        <dbReference type="ChEBI" id="CHEBI:49883"/>
    </ligand>
</feature>
<feature type="binding site" evidence="1">
    <location>
        <position position="194"/>
    </location>
    <ligand>
        <name>[4Fe-4S] cluster</name>
        <dbReference type="ChEBI" id="CHEBI:49883"/>
    </ligand>
</feature>
<feature type="binding site" evidence="1">
    <location>
        <position position="199"/>
    </location>
    <ligand>
        <name>[4Fe-4S] cluster</name>
        <dbReference type="ChEBI" id="CHEBI:49883"/>
    </ligand>
</feature>
<feature type="binding site" evidence="1">
    <location>
        <position position="205"/>
    </location>
    <ligand>
        <name>[4Fe-4S] cluster</name>
        <dbReference type="ChEBI" id="CHEBI:49883"/>
    </ligand>
</feature>
<protein>
    <recommendedName>
        <fullName evidence="1">ATP-dependent DNA helicase DinG</fullName>
        <ecNumber evidence="1">5.6.2.3</ecNumber>
    </recommendedName>
    <alternativeName>
        <fullName evidence="1">DNA 5'-3' helicase subunit DinG</fullName>
    </alternativeName>
</protein>
<comment type="function">
    <text evidence="1">DNA-dependent ATPase and 5'-3' DNA helicase. Unwinds D-loops, R-loops, forked DNA and G-quadruplex DNA.</text>
</comment>
<comment type="catalytic activity">
    <reaction evidence="1">
        <text>Couples ATP hydrolysis with the unwinding of duplex DNA at the replication fork by translocating in the 5'-3' direction. This creates two antiparallel DNA single strands (ssDNA). The leading ssDNA polymer is the template for DNA polymerase III holoenzyme which synthesizes a continuous strand.</text>
        <dbReference type="EC" id="5.6.2.3"/>
    </reaction>
</comment>
<comment type="catalytic activity">
    <reaction evidence="1">
        <text>ATP + H2O = ADP + phosphate + H(+)</text>
        <dbReference type="Rhea" id="RHEA:13065"/>
        <dbReference type="ChEBI" id="CHEBI:15377"/>
        <dbReference type="ChEBI" id="CHEBI:15378"/>
        <dbReference type="ChEBI" id="CHEBI:30616"/>
        <dbReference type="ChEBI" id="CHEBI:43474"/>
        <dbReference type="ChEBI" id="CHEBI:456216"/>
        <dbReference type="EC" id="5.6.2.3"/>
    </reaction>
</comment>
<comment type="cofactor">
    <cofactor evidence="1">
        <name>[4Fe-4S] cluster</name>
        <dbReference type="ChEBI" id="CHEBI:49883"/>
    </cofactor>
    <text evidence="1">Binds 1 [4Fe-4S] cluster.</text>
</comment>
<comment type="similarity">
    <text evidence="1">Belongs to the helicase family. DinG subfamily. Type 1 sub-subfamily.</text>
</comment>
<accession>Q8ZQN7</accession>
<reference key="1">
    <citation type="journal article" date="2001" name="Nature">
        <title>Complete genome sequence of Salmonella enterica serovar Typhimurium LT2.</title>
        <authorList>
            <person name="McClelland M."/>
            <person name="Sanderson K.E."/>
            <person name="Spieth J."/>
            <person name="Clifton S.W."/>
            <person name="Latreille P."/>
            <person name="Courtney L."/>
            <person name="Porwollik S."/>
            <person name="Ali J."/>
            <person name="Dante M."/>
            <person name="Du F."/>
            <person name="Hou S."/>
            <person name="Layman D."/>
            <person name="Leonard S."/>
            <person name="Nguyen C."/>
            <person name="Scott K."/>
            <person name="Holmes A."/>
            <person name="Grewal N."/>
            <person name="Mulvaney E."/>
            <person name="Ryan E."/>
            <person name="Sun H."/>
            <person name="Florea L."/>
            <person name="Miller W."/>
            <person name="Stoneking T."/>
            <person name="Nhan M."/>
            <person name="Waterston R."/>
            <person name="Wilson R.K."/>
        </authorList>
    </citation>
    <scope>NUCLEOTIDE SEQUENCE [LARGE SCALE GENOMIC DNA]</scope>
    <source>
        <strain>LT2 / SGSC1412 / ATCC 700720</strain>
    </source>
</reference>
<dbReference type="EC" id="5.6.2.3" evidence="1"/>
<dbReference type="EMBL" id="AE006468">
    <property type="protein sequence ID" value="AAL19758.1"/>
    <property type="molecule type" value="Genomic_DNA"/>
</dbReference>
<dbReference type="RefSeq" id="NP_459799.1">
    <property type="nucleotide sequence ID" value="NC_003197.2"/>
</dbReference>
<dbReference type="RefSeq" id="WP_001218630.1">
    <property type="nucleotide sequence ID" value="NC_003197.2"/>
</dbReference>
<dbReference type="SMR" id="Q8ZQN7"/>
<dbReference type="STRING" id="99287.STM0821"/>
<dbReference type="PaxDb" id="99287-STM0821"/>
<dbReference type="GeneID" id="1252341"/>
<dbReference type="KEGG" id="stm:STM0821"/>
<dbReference type="PATRIC" id="fig|99287.12.peg.855"/>
<dbReference type="HOGENOM" id="CLU_012117_4_1_6"/>
<dbReference type="OMA" id="FSSYWQM"/>
<dbReference type="PhylomeDB" id="Q8ZQN7"/>
<dbReference type="BioCyc" id="SENT99287:STM0821-MONOMER"/>
<dbReference type="Proteomes" id="UP000001014">
    <property type="component" value="Chromosome"/>
</dbReference>
<dbReference type="GO" id="GO:0051539">
    <property type="term" value="F:4 iron, 4 sulfur cluster binding"/>
    <property type="evidence" value="ECO:0000318"/>
    <property type="project" value="GO_Central"/>
</dbReference>
<dbReference type="GO" id="GO:0043139">
    <property type="term" value="F:5'-3' DNA helicase activity"/>
    <property type="evidence" value="ECO:0007669"/>
    <property type="project" value="UniProtKB-UniRule"/>
</dbReference>
<dbReference type="GO" id="GO:0005524">
    <property type="term" value="F:ATP binding"/>
    <property type="evidence" value="ECO:0007669"/>
    <property type="project" value="UniProtKB-UniRule"/>
</dbReference>
<dbReference type="GO" id="GO:0016887">
    <property type="term" value="F:ATP hydrolysis activity"/>
    <property type="evidence" value="ECO:0007669"/>
    <property type="project" value="RHEA"/>
</dbReference>
<dbReference type="GO" id="GO:0003677">
    <property type="term" value="F:DNA binding"/>
    <property type="evidence" value="ECO:0007669"/>
    <property type="project" value="UniProtKB-UniRule"/>
</dbReference>
<dbReference type="GO" id="GO:0003678">
    <property type="term" value="F:DNA helicase activity"/>
    <property type="evidence" value="ECO:0000318"/>
    <property type="project" value="GO_Central"/>
</dbReference>
<dbReference type="GO" id="GO:0033677">
    <property type="term" value="F:DNA/RNA helicase activity"/>
    <property type="evidence" value="ECO:0000318"/>
    <property type="project" value="GO_Central"/>
</dbReference>
<dbReference type="GO" id="GO:0046872">
    <property type="term" value="F:metal ion binding"/>
    <property type="evidence" value="ECO:0007669"/>
    <property type="project" value="UniProtKB-KW"/>
</dbReference>
<dbReference type="GO" id="GO:0006281">
    <property type="term" value="P:DNA repair"/>
    <property type="evidence" value="ECO:0000318"/>
    <property type="project" value="GO_Central"/>
</dbReference>
<dbReference type="GO" id="GO:0009432">
    <property type="term" value="P:SOS response"/>
    <property type="evidence" value="ECO:0000318"/>
    <property type="project" value="GO_Central"/>
</dbReference>
<dbReference type="FunFam" id="3.40.50.300:FF:000685">
    <property type="entry name" value="ATP-dependent DNA helicase DinG"/>
    <property type="match status" value="1"/>
</dbReference>
<dbReference type="FunFam" id="3.40.50.300:FF:000700">
    <property type="entry name" value="ATP-dependent DNA helicase DinG"/>
    <property type="match status" value="1"/>
</dbReference>
<dbReference type="Gene3D" id="3.40.50.300">
    <property type="entry name" value="P-loop containing nucleotide triphosphate hydrolases"/>
    <property type="match status" value="2"/>
</dbReference>
<dbReference type="HAMAP" id="MF_02205">
    <property type="entry name" value="DinG_proteobact"/>
    <property type="match status" value="1"/>
</dbReference>
<dbReference type="InterPro" id="IPR006555">
    <property type="entry name" value="ATP-dep_Helicase_C"/>
</dbReference>
<dbReference type="InterPro" id="IPR011545">
    <property type="entry name" value="DEAD/DEAH_box_helicase_dom"/>
</dbReference>
<dbReference type="InterPro" id="IPR045028">
    <property type="entry name" value="DinG/Rad3-like"/>
</dbReference>
<dbReference type="InterPro" id="IPR039000">
    <property type="entry name" value="DinG_proteobact"/>
</dbReference>
<dbReference type="InterPro" id="IPR014013">
    <property type="entry name" value="Helic_SF1/SF2_ATP-bd_DinG/Rad3"/>
</dbReference>
<dbReference type="InterPro" id="IPR006554">
    <property type="entry name" value="Helicase-like_DEXD_c2"/>
</dbReference>
<dbReference type="InterPro" id="IPR014001">
    <property type="entry name" value="Helicase_ATP-bd"/>
</dbReference>
<dbReference type="InterPro" id="IPR027417">
    <property type="entry name" value="P-loop_NTPase"/>
</dbReference>
<dbReference type="InterPro" id="IPR010614">
    <property type="entry name" value="RAD3-like_helicase_DEAD"/>
</dbReference>
<dbReference type="NCBIfam" id="NF008729">
    <property type="entry name" value="PRK11747.1"/>
    <property type="match status" value="1"/>
</dbReference>
<dbReference type="PANTHER" id="PTHR11472:SF59">
    <property type="entry name" value="ATP-DEPENDENT DNA HELICASE DING"/>
    <property type="match status" value="1"/>
</dbReference>
<dbReference type="PANTHER" id="PTHR11472">
    <property type="entry name" value="DNA REPAIR DEAD HELICASE RAD3/XP-D SUBFAMILY MEMBER"/>
    <property type="match status" value="1"/>
</dbReference>
<dbReference type="Pfam" id="PF00270">
    <property type="entry name" value="DEAD"/>
    <property type="match status" value="1"/>
</dbReference>
<dbReference type="Pfam" id="PF06733">
    <property type="entry name" value="DEAD_2"/>
    <property type="match status" value="1"/>
</dbReference>
<dbReference type="Pfam" id="PF13307">
    <property type="entry name" value="Helicase_C_2"/>
    <property type="match status" value="1"/>
</dbReference>
<dbReference type="SMART" id="SM00487">
    <property type="entry name" value="DEXDc"/>
    <property type="match status" value="1"/>
</dbReference>
<dbReference type="SMART" id="SM00488">
    <property type="entry name" value="DEXDc2"/>
    <property type="match status" value="1"/>
</dbReference>
<dbReference type="SMART" id="SM00491">
    <property type="entry name" value="HELICc2"/>
    <property type="match status" value="1"/>
</dbReference>
<dbReference type="SUPFAM" id="SSF52540">
    <property type="entry name" value="P-loop containing nucleoside triphosphate hydrolases"/>
    <property type="match status" value="1"/>
</dbReference>
<dbReference type="PROSITE" id="PS51193">
    <property type="entry name" value="HELICASE_ATP_BIND_2"/>
    <property type="match status" value="1"/>
</dbReference>
<dbReference type="PROSITE" id="PS51194">
    <property type="entry name" value="HELICASE_CTER"/>
    <property type="match status" value="1"/>
</dbReference>
<sequence>MALTAALKAQIAAWYKALQDQIPDFIPRAPQRQMIADVARTLAGEEGRHLAIEAPTGVGKTLSYLIPGIAIAREEQKTLVVSTANVALQDQIFSKDLPLLRKIIPDLRFTAAFGRGRYVCPRNLAALASSEPTQQDLLAFLDDELTPNNQEEQKRCARLKGDLDGYKWDGLRDHTDIAIDDDLWRRLSTDKASCLNRNCHYYRECPFFVARREIQEAEVVVANHALVMAAMESEAVLPEPKHLLLVLDEGHHLPDVARDALEMSAEITASWYRLQLDLFSKLVATCMEQFRPKTTPPLANPERLNAHCEEVYELIASLNAILNLYMPAAQEAEHRFAMGELPDEVMEICQRLAKLTETLRGLAESFLNDLSEKTGSHDIVRLHRVILQMNRALGMFEAQSKLWRLASMAQSSGAPVSKWATREIREGQLHVWFHCVGIRVSDQLERLLWRSVPHIIVTSATLRSLNSFSRLQEMSGLKEKAGDRFVALDSPFNHVEQGKLVIPQMRYEPTIDNEEQHIAEMAAYFREQLESKKHHGMLVLFASGRAMQRFLEHVADVRLLLLVQGDQPRYRLVELHRKRVESGERSVLVGLQSFAEGLDLKGELLTQVHIHKIAFPPIDSPVVITEGEWLKSLNRYPFEVQSLPSASFNLIQQVGRLIRSHACRGEVVIYDKRLLTKNYGQRLLNALPVFPIEQPAVPDVIVKPKAKPARRRRR</sequence>
<gene>
    <name evidence="1" type="primary">dinG</name>
    <name type="ordered locus">STM0821</name>
</gene>
<evidence type="ECO:0000255" key="1">
    <source>
        <dbReference type="HAMAP-Rule" id="MF_02205"/>
    </source>
</evidence>
<evidence type="ECO:0000305" key="2"/>
<keyword id="KW-0004">4Fe-4S</keyword>
<keyword id="KW-0067">ATP-binding</keyword>
<keyword id="KW-0238">DNA-binding</keyword>
<keyword id="KW-0347">Helicase</keyword>
<keyword id="KW-0378">Hydrolase</keyword>
<keyword id="KW-0408">Iron</keyword>
<keyword id="KW-0411">Iron-sulfur</keyword>
<keyword id="KW-0413">Isomerase</keyword>
<keyword id="KW-0479">Metal-binding</keyword>
<keyword id="KW-0547">Nucleotide-binding</keyword>
<keyword id="KW-1185">Reference proteome</keyword>
<name>DING_SALTY</name>
<organism>
    <name type="scientific">Salmonella typhimurium (strain LT2 / SGSC1412 / ATCC 700720)</name>
    <dbReference type="NCBI Taxonomy" id="99287"/>
    <lineage>
        <taxon>Bacteria</taxon>
        <taxon>Pseudomonadati</taxon>
        <taxon>Pseudomonadota</taxon>
        <taxon>Gammaproteobacteria</taxon>
        <taxon>Enterobacterales</taxon>
        <taxon>Enterobacteriaceae</taxon>
        <taxon>Salmonella</taxon>
    </lineage>
</organism>